<proteinExistence type="predicted"/>
<reference key="1">
    <citation type="journal article" date="1998" name="Nature">
        <title>The complete genome of the hyperthermophilic bacterium Aquifex aeolicus.</title>
        <authorList>
            <person name="Deckert G."/>
            <person name="Warren P.V."/>
            <person name="Gaasterland T."/>
            <person name="Young W.G."/>
            <person name="Lenox A.L."/>
            <person name="Graham D.E."/>
            <person name="Overbeek R."/>
            <person name="Snead M.A."/>
            <person name="Keller M."/>
            <person name="Aujay M."/>
            <person name="Huber R."/>
            <person name="Feldman R.A."/>
            <person name="Short J.M."/>
            <person name="Olsen G.J."/>
            <person name="Swanson R.V."/>
        </authorList>
    </citation>
    <scope>NUCLEOTIDE SEQUENCE [LARGE SCALE GENOMIC DNA]</scope>
    <source>
        <strain>VF5</strain>
    </source>
</reference>
<evidence type="ECO:0000255" key="1"/>
<evidence type="ECO:0000305" key="2"/>
<organism>
    <name type="scientific">Aquifex aeolicus (strain VF5)</name>
    <dbReference type="NCBI Taxonomy" id="224324"/>
    <lineage>
        <taxon>Bacteria</taxon>
        <taxon>Pseudomonadati</taxon>
        <taxon>Aquificota</taxon>
        <taxon>Aquificia</taxon>
        <taxon>Aquificales</taxon>
        <taxon>Aquificaceae</taxon>
        <taxon>Aquifex</taxon>
    </lineage>
</organism>
<keyword id="KW-0472">Membrane</keyword>
<keyword id="KW-1185">Reference proteome</keyword>
<keyword id="KW-0812">Transmembrane</keyword>
<keyword id="KW-1133">Transmembrane helix</keyword>
<comment type="subcellular location">
    <subcellularLocation>
        <location evidence="2">Membrane</location>
        <topology evidence="2">Single-pass membrane protein</topology>
    </subcellularLocation>
</comment>
<sequence length="219" mass="25050">MKKKTGGMRIFKVFGLFLFSLIFFGLLSLATFPKFLLFDRLLIQNKIFLIAQKVKENSMSIELFKGKVYFQNREALEFDYTKLSLGFLSVNGKILCRGKISEISYSFLGSIETKFRDFSCTPFVKKVNGRIELSDGIYGRVKLEGFKTELALLDEINLNFKGQTFTGSVKYLGMELKGQGRITLNRKNFLMSKVDGEFKGNGVRIKVQGTLNNLRVYMK</sequence>
<name>Y1287_AQUAE</name>
<protein>
    <recommendedName>
        <fullName>Uncharacterized protein aq_1287</fullName>
    </recommendedName>
</protein>
<gene>
    <name type="ordered locus">aq_1287</name>
</gene>
<accession>O67319</accession>
<feature type="chain" id="PRO_0000186917" description="Uncharacterized protein aq_1287">
    <location>
        <begin position="1"/>
        <end position="219"/>
    </location>
</feature>
<feature type="transmembrane region" description="Helical" evidence="1">
    <location>
        <begin position="13"/>
        <end position="32"/>
    </location>
</feature>
<dbReference type="EMBL" id="AE000657">
    <property type="protein sequence ID" value="AAC07280.1"/>
    <property type="molecule type" value="Genomic_DNA"/>
</dbReference>
<dbReference type="PIR" id="D70411">
    <property type="entry name" value="D70411"/>
</dbReference>
<dbReference type="RefSeq" id="NP_213883.1">
    <property type="nucleotide sequence ID" value="NC_000918.1"/>
</dbReference>
<dbReference type="STRING" id="224324.aq_1287"/>
<dbReference type="EnsemblBacteria" id="AAC07280">
    <property type="protein sequence ID" value="AAC07280"/>
    <property type="gene ID" value="aq_1287"/>
</dbReference>
<dbReference type="KEGG" id="aae:aq_1287"/>
<dbReference type="HOGENOM" id="CLU_109692_0_0_0"/>
<dbReference type="InParanoid" id="O67319"/>
<dbReference type="OrthoDB" id="9857072at2"/>
<dbReference type="Proteomes" id="UP000000798">
    <property type="component" value="Chromosome"/>
</dbReference>
<dbReference type="GO" id="GO:0016020">
    <property type="term" value="C:membrane"/>
    <property type="evidence" value="ECO:0007669"/>
    <property type="project" value="UniProtKB-SubCell"/>
</dbReference>
<dbReference type="GO" id="GO:0003909">
    <property type="term" value="F:DNA ligase activity"/>
    <property type="evidence" value="ECO:0007669"/>
    <property type="project" value="InterPro"/>
</dbReference>
<dbReference type="InterPro" id="IPR016059">
    <property type="entry name" value="DNA_ligase_ATP-dep_CS"/>
</dbReference>
<dbReference type="PROSITE" id="PS00697">
    <property type="entry name" value="DNA_LIGASE_A1"/>
    <property type="match status" value="1"/>
</dbReference>